<sequence>MSVYSKLPSQLKKPLVKKAVVLLIALYGVKKLSPYFFGKLKGRTSKQVKGADPLTSNGEPLVEAARKRKRSPAVNREFFDRLIRLLKILFPRLFCKELGLLGFHSLALISRTFLSIYVANLDGQIVKTIVKKDPRAFVVELTKWLLIAIPATFVNSAIRYLEGQLTLAFRTRLVTHAYMLYFSDQTYYRVSNMDGRLANPDQSLTEDVVMFAASVAHLYSNLTKPILDVVVTCYTLIKTAESKGANTTWPSVIAGIVVALTAKVLRAFSPRFGKLVAEEARRKGDLRYMHSRIIANSEEIAFYGGHKIEMLQLQRSYNSLSRQINLILFKRLWYVMLEQFLMKYLWSASGLVMVAVPIITATGYSKYDSEDVKQAALDMKEEDLVSERTQAFTTARSLLNAAADAVERIMVSYKEVTELAGYTARVYEMFEVFEDVRDGVYRRSATEVKPEETGAPQNVTHGMRVEGPLQIRGQVIDVEQGIKCENLPIITPTGDVVVSSLNMQVDEGMHLLITGPNGCGKSSLFRILSGLWPVYSGVLYKPSPDHMFYIPQRPYMSVGTLRDQVIYPHSVQEMQEKGITDRQLEEILQTVSLRYILEREGGWDAVSDWKDVLSGGEKQRMGMARMFYHKPQYALLDECTSAVSIDVEGKIFEAAKDAGISLLSITHRPSLWKYHSHLLQFDGEGGWRFEKLDASTRISLQDEKIRLETQLSGIPKMQQRLTELCRILGEDSSLPTPGDEEEDEEEDEKQTERDVQSAGKEKDLME</sequence>
<dbReference type="EC" id="3.1.2.-" evidence="1"/>
<dbReference type="EC" id="7.6.2.-" evidence="1"/>
<dbReference type="EMBL" id="BX005406">
    <property type="status" value="NOT_ANNOTATED_CDS"/>
    <property type="molecule type" value="Genomic_DNA"/>
</dbReference>
<dbReference type="RefSeq" id="XP_005166771.1">
    <property type="nucleotide sequence ID" value="XM_005166714.5"/>
</dbReference>
<dbReference type="SMR" id="F1RBC8"/>
<dbReference type="FunCoup" id="F1RBC8">
    <property type="interactions" value="1074"/>
</dbReference>
<dbReference type="STRING" id="7955.ENSDARP00000101144"/>
<dbReference type="TCDB" id="3.A.1.203.15">
    <property type="family name" value="the atp-binding cassette (abc) superfamily"/>
</dbReference>
<dbReference type="PaxDb" id="7955-ENSDARP00000101144"/>
<dbReference type="Ensembl" id="ENSDART00000111392">
    <property type="protein sequence ID" value="ENSDARP00000101144"/>
    <property type="gene ID" value="ENSDARG00000074876"/>
</dbReference>
<dbReference type="GeneID" id="566367"/>
<dbReference type="AGR" id="ZFIN:ZDB-GENE-050517-27"/>
<dbReference type="CTD" id="215"/>
<dbReference type="ZFIN" id="ZDB-GENE-050517-27">
    <property type="gene designation" value="abcd1"/>
</dbReference>
<dbReference type="eggNOG" id="KOG0064">
    <property type="taxonomic scope" value="Eukaryota"/>
</dbReference>
<dbReference type="HOGENOM" id="CLU_007587_1_1_1"/>
<dbReference type="InParanoid" id="F1RBC8"/>
<dbReference type="OMA" id="CHRTSLW"/>
<dbReference type="OrthoDB" id="422637at2759"/>
<dbReference type="PhylomeDB" id="F1RBC8"/>
<dbReference type="TreeFam" id="TF105205"/>
<dbReference type="Reactome" id="R-DRE-1369062">
    <property type="pathway name" value="ABC transporters in lipid homeostasis"/>
</dbReference>
<dbReference type="Reactome" id="R-DRE-9603798">
    <property type="pathway name" value="Class I peroxisomal membrane protein import"/>
</dbReference>
<dbReference type="PRO" id="PR:F1RBC8"/>
<dbReference type="Proteomes" id="UP000000437">
    <property type="component" value="Chromosome 8"/>
</dbReference>
<dbReference type="Bgee" id="ENSDARG00000074876">
    <property type="expression patterns" value="Expressed in mature ovarian follicle and 19 other cell types or tissues"/>
</dbReference>
<dbReference type="ExpressionAtlas" id="F1RBC8">
    <property type="expression patterns" value="baseline"/>
</dbReference>
<dbReference type="GO" id="GO:0005778">
    <property type="term" value="C:peroxisomal membrane"/>
    <property type="evidence" value="ECO:0000318"/>
    <property type="project" value="GO_Central"/>
</dbReference>
<dbReference type="GO" id="GO:0005777">
    <property type="term" value="C:peroxisome"/>
    <property type="evidence" value="ECO:0000250"/>
    <property type="project" value="UniProtKB"/>
</dbReference>
<dbReference type="GO" id="GO:0015607">
    <property type="term" value="F:ABC-type fatty-acyl-CoA transporter activity"/>
    <property type="evidence" value="ECO:0007669"/>
    <property type="project" value="UniProtKB-EC"/>
</dbReference>
<dbReference type="GO" id="GO:0005524">
    <property type="term" value="F:ATP binding"/>
    <property type="evidence" value="ECO:0000318"/>
    <property type="project" value="GO_Central"/>
</dbReference>
<dbReference type="GO" id="GO:0016887">
    <property type="term" value="F:ATP hydrolysis activity"/>
    <property type="evidence" value="ECO:0007669"/>
    <property type="project" value="InterPro"/>
</dbReference>
<dbReference type="GO" id="GO:0042626">
    <property type="term" value="F:ATPase-coupled transmembrane transporter activity"/>
    <property type="evidence" value="ECO:0000318"/>
    <property type="project" value="GO_Central"/>
</dbReference>
<dbReference type="GO" id="GO:0047617">
    <property type="term" value="F:fatty acyl-CoA hydrolase activity"/>
    <property type="evidence" value="ECO:0000250"/>
    <property type="project" value="UniProtKB"/>
</dbReference>
<dbReference type="GO" id="GO:0005324">
    <property type="term" value="F:long-chain fatty acid transmembrane transporter activity"/>
    <property type="evidence" value="ECO:0000250"/>
    <property type="project" value="UniProtKB"/>
</dbReference>
<dbReference type="GO" id="GO:0052817">
    <property type="term" value="F:very long-chain fatty acyl-CoA hydrolase activity"/>
    <property type="evidence" value="ECO:0007669"/>
    <property type="project" value="RHEA"/>
</dbReference>
<dbReference type="GO" id="GO:0030325">
    <property type="term" value="P:adrenal gland development"/>
    <property type="evidence" value="ECO:0000315"/>
    <property type="project" value="UniProtKB"/>
</dbReference>
<dbReference type="GO" id="GO:0030301">
    <property type="term" value="P:cholesterol transport"/>
    <property type="evidence" value="ECO:0000315"/>
    <property type="project" value="ZFIN"/>
</dbReference>
<dbReference type="GO" id="GO:0006635">
    <property type="term" value="P:fatty acid beta-oxidation"/>
    <property type="evidence" value="ECO:0000250"/>
    <property type="project" value="UniProtKB"/>
</dbReference>
<dbReference type="GO" id="GO:0015910">
    <property type="term" value="P:long-chain fatty acid import into peroxisome"/>
    <property type="evidence" value="ECO:0000250"/>
    <property type="project" value="UniProtKB"/>
</dbReference>
<dbReference type="GO" id="GO:0061744">
    <property type="term" value="P:motor behavior"/>
    <property type="evidence" value="ECO:0000315"/>
    <property type="project" value="UniProtKB"/>
</dbReference>
<dbReference type="GO" id="GO:0014003">
    <property type="term" value="P:oligodendrocyte development"/>
    <property type="evidence" value="ECO:0000315"/>
    <property type="project" value="UniProtKB"/>
</dbReference>
<dbReference type="GO" id="GO:0007031">
    <property type="term" value="P:peroxisome organization"/>
    <property type="evidence" value="ECO:0000318"/>
    <property type="project" value="GO_Central"/>
</dbReference>
<dbReference type="GO" id="GO:0031643">
    <property type="term" value="P:positive regulation of myelination"/>
    <property type="evidence" value="ECO:0000315"/>
    <property type="project" value="UniProtKB"/>
</dbReference>
<dbReference type="GO" id="GO:0036269">
    <property type="term" value="P:swimming behavior"/>
    <property type="evidence" value="ECO:0000315"/>
    <property type="project" value="UniProtKB"/>
</dbReference>
<dbReference type="GO" id="GO:0042760">
    <property type="term" value="P:very long-chain fatty acid catabolic process"/>
    <property type="evidence" value="ECO:0000318"/>
    <property type="project" value="GO_Central"/>
</dbReference>
<dbReference type="GO" id="GO:0000038">
    <property type="term" value="P:very long-chain fatty acid metabolic process"/>
    <property type="evidence" value="ECO:0000315"/>
    <property type="project" value="UniProtKB"/>
</dbReference>
<dbReference type="CDD" id="cd03223">
    <property type="entry name" value="ABCD_peroxisomal_ALDP"/>
    <property type="match status" value="1"/>
</dbReference>
<dbReference type="FunFam" id="3.40.50.300:FF:000800">
    <property type="entry name" value="ATP-binding cassette sub-family D member 1"/>
    <property type="match status" value="1"/>
</dbReference>
<dbReference type="Gene3D" id="1.20.1560.10">
    <property type="entry name" value="ABC transporter type 1, transmembrane domain"/>
    <property type="match status" value="1"/>
</dbReference>
<dbReference type="Gene3D" id="3.40.50.300">
    <property type="entry name" value="P-loop containing nucleotide triphosphate hydrolases"/>
    <property type="match status" value="1"/>
</dbReference>
<dbReference type="InterPro" id="IPR003593">
    <property type="entry name" value="AAA+_ATPase"/>
</dbReference>
<dbReference type="InterPro" id="IPR011527">
    <property type="entry name" value="ABC1_TM_dom"/>
</dbReference>
<dbReference type="InterPro" id="IPR036640">
    <property type="entry name" value="ABC1_TM_sf"/>
</dbReference>
<dbReference type="InterPro" id="IPR003439">
    <property type="entry name" value="ABC_transporter-like_ATP-bd"/>
</dbReference>
<dbReference type="InterPro" id="IPR017871">
    <property type="entry name" value="ABC_transporter-like_CS"/>
</dbReference>
<dbReference type="InterPro" id="IPR050835">
    <property type="entry name" value="ABC_transporter_sub-D"/>
</dbReference>
<dbReference type="InterPro" id="IPR027417">
    <property type="entry name" value="P-loop_NTPase"/>
</dbReference>
<dbReference type="PANTHER" id="PTHR11384:SF71">
    <property type="entry name" value="ATP-BINDING CASSETTE SUB-FAMILY D MEMBER 1"/>
    <property type="match status" value="1"/>
</dbReference>
<dbReference type="PANTHER" id="PTHR11384">
    <property type="entry name" value="ATP-BINDING CASSETTE, SUB-FAMILY D MEMBER"/>
    <property type="match status" value="1"/>
</dbReference>
<dbReference type="Pfam" id="PF06472">
    <property type="entry name" value="ABC_membrane_2"/>
    <property type="match status" value="1"/>
</dbReference>
<dbReference type="Pfam" id="PF00005">
    <property type="entry name" value="ABC_tran"/>
    <property type="match status" value="1"/>
</dbReference>
<dbReference type="SMART" id="SM00382">
    <property type="entry name" value="AAA"/>
    <property type="match status" value="1"/>
</dbReference>
<dbReference type="SUPFAM" id="SSF90123">
    <property type="entry name" value="ABC transporter transmembrane region"/>
    <property type="match status" value="1"/>
</dbReference>
<dbReference type="SUPFAM" id="SSF52540">
    <property type="entry name" value="P-loop containing nucleoside triphosphate hydrolases"/>
    <property type="match status" value="1"/>
</dbReference>
<dbReference type="PROSITE" id="PS50929">
    <property type="entry name" value="ABC_TM1F"/>
    <property type="match status" value="1"/>
</dbReference>
<dbReference type="PROSITE" id="PS00211">
    <property type="entry name" value="ABC_TRANSPORTER_1"/>
    <property type="match status" value="1"/>
</dbReference>
<dbReference type="PROSITE" id="PS50893">
    <property type="entry name" value="ABC_TRANSPORTER_2"/>
    <property type="match status" value="1"/>
</dbReference>
<evidence type="ECO:0000250" key="1">
    <source>
        <dbReference type="UniProtKB" id="P33897"/>
    </source>
</evidence>
<evidence type="ECO:0000255" key="2"/>
<evidence type="ECO:0000255" key="3">
    <source>
        <dbReference type="PROSITE-ProRule" id="PRU00434"/>
    </source>
</evidence>
<evidence type="ECO:0000255" key="4">
    <source>
        <dbReference type="PROSITE-ProRule" id="PRU00441"/>
    </source>
</evidence>
<evidence type="ECO:0000256" key="5">
    <source>
        <dbReference type="SAM" id="MobiDB-lite"/>
    </source>
</evidence>
<evidence type="ECO:0000269" key="6">
    <source>
    </source>
</evidence>
<evidence type="ECO:0000305" key="7"/>
<evidence type="ECO:0000312" key="8">
    <source>
        <dbReference type="ZFIN" id="ZDB-GENE-050517-27"/>
    </source>
</evidence>
<feature type="chain" id="PRO_0000445227" description="ATP-binding cassette sub-family D member 1">
    <location>
        <begin position="1"/>
        <end position="766"/>
    </location>
</feature>
<feature type="transmembrane region" description="Helical" evidence="2 4">
    <location>
        <begin position="98"/>
        <end position="118"/>
    </location>
</feature>
<feature type="transmembrane region" description="Helical" evidence="2 4">
    <location>
        <begin position="138"/>
        <end position="158"/>
    </location>
</feature>
<feature type="transmembrane region" description="Helical" evidence="2 4">
    <location>
        <begin position="245"/>
        <end position="265"/>
    </location>
</feature>
<feature type="transmembrane region" description="Helical" evidence="2">
    <location>
        <begin position="340"/>
        <end position="360"/>
    </location>
</feature>
<feature type="transmembrane region" description="Helical" evidence="4">
    <location>
        <begin position="481"/>
        <end position="501"/>
    </location>
</feature>
<feature type="domain" description="ABC transmembrane type-1" evidence="4">
    <location>
        <begin position="101"/>
        <end position="393"/>
    </location>
</feature>
<feature type="domain" description="ABC transporter" evidence="3">
    <location>
        <begin position="482"/>
        <end position="708"/>
    </location>
</feature>
<feature type="region of interest" description="Disordered" evidence="5">
    <location>
        <begin position="728"/>
        <end position="766"/>
    </location>
</feature>
<feature type="compositionally biased region" description="Acidic residues" evidence="5">
    <location>
        <begin position="738"/>
        <end position="749"/>
    </location>
</feature>
<feature type="compositionally biased region" description="Basic and acidic residues" evidence="5">
    <location>
        <begin position="750"/>
        <end position="766"/>
    </location>
</feature>
<feature type="binding site" evidence="3">
    <location>
        <begin position="515"/>
        <end position="522"/>
    </location>
    <ligand>
        <name>ATP</name>
        <dbReference type="ChEBI" id="CHEBI:30616"/>
    </ligand>
</feature>
<gene>
    <name evidence="8" type="primary">abcd1</name>
    <name type="ORF">si:ch211-169p10</name>
</gene>
<comment type="function">
    <text evidence="1 6">ATP-dependent transporter of the ATP-binding cassette (ABC) family involved in the transport of very long chain fatty acid (VLCFA)-CoA from the cytosol to the peroxisome lumen. Coupled to the ATP-dependent transporter activity also has a fatty acyl-CoA thioesterase activity (ACOT) and hydrolyzes VLCFA-CoA into VLCFA prior their ATP-dependent transport into peroxisomes, the ACOT activity is essential during this transport process. Thus, plays a role in regulation of VLCFAs and energy metabolism namely, in the degradation and biosynthesis of fatty acids by beta-oxidation, mitochondrial function and microsomal fatty acid elongation (By similarity). Involved in oligodendrocyte patterning and myelination (PubMed:28911205).</text>
</comment>
<comment type="catalytic activity">
    <reaction evidence="1">
        <text>a very long-chain fatty acyl-CoA + H2O = a very long-chain fatty acid + CoA + H(+)</text>
        <dbReference type="Rhea" id="RHEA:67072"/>
        <dbReference type="ChEBI" id="CHEBI:15377"/>
        <dbReference type="ChEBI" id="CHEBI:15378"/>
        <dbReference type="ChEBI" id="CHEBI:57287"/>
        <dbReference type="ChEBI" id="CHEBI:58950"/>
        <dbReference type="ChEBI" id="CHEBI:138261"/>
    </reaction>
</comment>
<comment type="catalytic activity">
    <reaction evidence="1">
        <text>a very long-chain fatty acid(in) + ATP + H2O = a very long-chain fatty acid(out) + ADP + phosphate + H(+)</text>
        <dbReference type="Rhea" id="RHEA:67080"/>
        <dbReference type="ChEBI" id="CHEBI:15377"/>
        <dbReference type="ChEBI" id="CHEBI:15378"/>
        <dbReference type="ChEBI" id="CHEBI:30616"/>
        <dbReference type="ChEBI" id="CHEBI:43474"/>
        <dbReference type="ChEBI" id="CHEBI:58950"/>
        <dbReference type="ChEBI" id="CHEBI:456216"/>
    </reaction>
</comment>
<comment type="subcellular location">
    <subcellularLocation>
        <location evidence="1">Peroxisome membrane</location>
        <topology evidence="2">Multi-pass membrane protein</topology>
    </subcellularLocation>
</comment>
<comment type="developmental stage">
    <text evidence="6">Expressed from 48 hpf in the nervous system, floor plate, and pronephros/interrenal gland. By 72 hpf and persisting through 96 hpf expression is present in the central nervous system (CNS), floorplate, interrenal glands/pronephros, and gut. At 72 hpf expressed in the brain and spinal cord.</text>
</comment>
<comment type="disruption phenotype">
    <text evidence="6">abcd1 deficient zebrafish appear normal. By day of life five abcd1 mutants demonstrate impaired motor function, and overall survival to adulthood of heterozygous and homozygous mutants is decreased.</text>
</comment>
<comment type="similarity">
    <text evidence="7">Belongs to the ABC transporter superfamily. ABCD family. Peroxisomal fatty acyl CoA transporter (TC 3.A.1.203) subfamily.</text>
</comment>
<reference key="1">
    <citation type="journal article" date="2013" name="Nature">
        <title>The zebrafish reference genome sequence and its relationship to the human genome.</title>
        <authorList>
            <person name="Howe K."/>
            <person name="Clark M.D."/>
            <person name="Torroja C.F."/>
            <person name="Torrance J."/>
            <person name="Berthelot C."/>
            <person name="Muffato M."/>
            <person name="Collins J.E."/>
            <person name="Humphray S."/>
            <person name="McLaren K."/>
            <person name="Matthews L."/>
            <person name="McLaren S."/>
            <person name="Sealy I."/>
            <person name="Caccamo M."/>
            <person name="Churcher C."/>
            <person name="Scott C."/>
            <person name="Barrett J.C."/>
            <person name="Koch R."/>
            <person name="Rauch G.J."/>
            <person name="White S."/>
            <person name="Chow W."/>
            <person name="Kilian B."/>
            <person name="Quintais L.T."/>
            <person name="Guerra-Assuncao J.A."/>
            <person name="Zhou Y."/>
            <person name="Gu Y."/>
            <person name="Yen J."/>
            <person name="Vogel J.H."/>
            <person name="Eyre T."/>
            <person name="Redmond S."/>
            <person name="Banerjee R."/>
            <person name="Chi J."/>
            <person name="Fu B."/>
            <person name="Langley E."/>
            <person name="Maguire S.F."/>
            <person name="Laird G.K."/>
            <person name="Lloyd D."/>
            <person name="Kenyon E."/>
            <person name="Donaldson S."/>
            <person name="Sehra H."/>
            <person name="Almeida-King J."/>
            <person name="Loveland J."/>
            <person name="Trevanion S."/>
            <person name="Jones M."/>
            <person name="Quail M."/>
            <person name="Willey D."/>
            <person name="Hunt A."/>
            <person name="Burton J."/>
            <person name="Sims S."/>
            <person name="McLay K."/>
            <person name="Plumb B."/>
            <person name="Davis J."/>
            <person name="Clee C."/>
            <person name="Oliver K."/>
            <person name="Clark R."/>
            <person name="Riddle C."/>
            <person name="Elliot D."/>
            <person name="Threadgold G."/>
            <person name="Harden G."/>
            <person name="Ware D."/>
            <person name="Begum S."/>
            <person name="Mortimore B."/>
            <person name="Kerry G."/>
            <person name="Heath P."/>
            <person name="Phillimore B."/>
            <person name="Tracey A."/>
            <person name="Corby N."/>
            <person name="Dunn M."/>
            <person name="Johnson C."/>
            <person name="Wood J."/>
            <person name="Clark S."/>
            <person name="Pelan S."/>
            <person name="Griffiths G."/>
            <person name="Smith M."/>
            <person name="Glithero R."/>
            <person name="Howden P."/>
            <person name="Barker N."/>
            <person name="Lloyd C."/>
            <person name="Stevens C."/>
            <person name="Harley J."/>
            <person name="Holt K."/>
            <person name="Panagiotidis G."/>
            <person name="Lovell J."/>
            <person name="Beasley H."/>
            <person name="Henderson C."/>
            <person name="Gordon D."/>
            <person name="Auger K."/>
            <person name="Wright D."/>
            <person name="Collins J."/>
            <person name="Raisen C."/>
            <person name="Dyer L."/>
            <person name="Leung K."/>
            <person name="Robertson L."/>
            <person name="Ambridge K."/>
            <person name="Leongamornlert D."/>
            <person name="McGuire S."/>
            <person name="Gilderthorp R."/>
            <person name="Griffiths C."/>
            <person name="Manthravadi D."/>
            <person name="Nichol S."/>
            <person name="Barker G."/>
            <person name="Whitehead S."/>
            <person name="Kay M."/>
            <person name="Brown J."/>
            <person name="Murnane C."/>
            <person name="Gray E."/>
            <person name="Humphries M."/>
            <person name="Sycamore N."/>
            <person name="Barker D."/>
            <person name="Saunders D."/>
            <person name="Wallis J."/>
            <person name="Babbage A."/>
            <person name="Hammond S."/>
            <person name="Mashreghi-Mohammadi M."/>
            <person name="Barr L."/>
            <person name="Martin S."/>
            <person name="Wray P."/>
            <person name="Ellington A."/>
            <person name="Matthews N."/>
            <person name="Ellwood M."/>
            <person name="Woodmansey R."/>
            <person name="Clark G."/>
            <person name="Cooper J."/>
            <person name="Tromans A."/>
            <person name="Grafham D."/>
            <person name="Skuce C."/>
            <person name="Pandian R."/>
            <person name="Andrews R."/>
            <person name="Harrison E."/>
            <person name="Kimberley A."/>
            <person name="Garnett J."/>
            <person name="Fosker N."/>
            <person name="Hall R."/>
            <person name="Garner P."/>
            <person name="Kelly D."/>
            <person name="Bird C."/>
            <person name="Palmer S."/>
            <person name="Gehring I."/>
            <person name="Berger A."/>
            <person name="Dooley C.M."/>
            <person name="Ersan-Urun Z."/>
            <person name="Eser C."/>
            <person name="Geiger H."/>
            <person name="Geisler M."/>
            <person name="Karotki L."/>
            <person name="Kirn A."/>
            <person name="Konantz J."/>
            <person name="Konantz M."/>
            <person name="Oberlander M."/>
            <person name="Rudolph-Geiger S."/>
            <person name="Teucke M."/>
            <person name="Lanz C."/>
            <person name="Raddatz G."/>
            <person name="Osoegawa K."/>
            <person name="Zhu B."/>
            <person name="Rapp A."/>
            <person name="Widaa S."/>
            <person name="Langford C."/>
            <person name="Yang F."/>
            <person name="Schuster S.C."/>
            <person name="Carter N.P."/>
            <person name="Harrow J."/>
            <person name="Ning Z."/>
            <person name="Herrero J."/>
            <person name="Searle S.M."/>
            <person name="Enright A."/>
            <person name="Geisler R."/>
            <person name="Plasterk R.H."/>
            <person name="Lee C."/>
            <person name="Westerfield M."/>
            <person name="de Jong P.J."/>
            <person name="Zon L.I."/>
            <person name="Postlethwait J.H."/>
            <person name="Nusslein-Volhard C."/>
            <person name="Hubbard T.J."/>
            <person name="Roest Crollius H."/>
            <person name="Rogers J."/>
            <person name="Stemple D.L."/>
        </authorList>
    </citation>
    <scope>NUCLEOTIDE SEQUENCE [LARGE SCALE GENOMIC DNA]</scope>
    <source>
        <strain>Tuebingen</strain>
    </source>
</reference>
<reference key="2">
    <citation type="journal article" date="2017" name="Hum. Mol. Genet.">
        <title>A zebrafish model of X-linked adrenoleukodystrophy recapitulates key disease features and demonstrates a developmental requirement for abcd1 in oligodendrocyte patterning and myelination.</title>
        <authorList>
            <person name="Strachan L.R."/>
            <person name="Stevenson T.J."/>
            <person name="Freshner B."/>
            <person name="Keefe M.D."/>
            <person name="Miranda Bowles D."/>
            <person name="Bonkowsky J.L."/>
        </authorList>
    </citation>
    <scope>DEVELOPMENTAL STAGE</scope>
    <scope>DISRUPTION PHENOTYPE</scope>
    <scope>FUNCTION</scope>
</reference>
<protein>
    <recommendedName>
        <fullName evidence="7">ATP-binding cassette sub-family D member 1</fullName>
        <ecNumber evidence="1">3.1.2.-</ecNumber>
        <ecNumber evidence="1">7.6.2.-</ecNumber>
    </recommendedName>
    <alternativeName>
        <fullName evidence="1">Adrenoleukodystrophy protein</fullName>
        <shortName evidence="1">ALDP</shortName>
    </alternativeName>
</protein>
<organism>
    <name type="scientific">Danio rerio</name>
    <name type="common">Zebrafish</name>
    <name type="synonym">Brachydanio rerio</name>
    <dbReference type="NCBI Taxonomy" id="7955"/>
    <lineage>
        <taxon>Eukaryota</taxon>
        <taxon>Metazoa</taxon>
        <taxon>Chordata</taxon>
        <taxon>Craniata</taxon>
        <taxon>Vertebrata</taxon>
        <taxon>Euteleostomi</taxon>
        <taxon>Actinopterygii</taxon>
        <taxon>Neopterygii</taxon>
        <taxon>Teleostei</taxon>
        <taxon>Ostariophysi</taxon>
        <taxon>Cypriniformes</taxon>
        <taxon>Danionidae</taxon>
        <taxon>Danioninae</taxon>
        <taxon>Danio</taxon>
    </lineage>
</organism>
<proteinExistence type="evidence at transcript level"/>
<accession>F1RBC8</accession>
<name>ABCD1_DANRE</name>
<keyword id="KW-0067">ATP-binding</keyword>
<keyword id="KW-0378">Hydrolase</keyword>
<keyword id="KW-0472">Membrane</keyword>
<keyword id="KW-0547">Nucleotide-binding</keyword>
<keyword id="KW-0576">Peroxisome</keyword>
<keyword id="KW-1185">Reference proteome</keyword>
<keyword id="KW-1278">Translocase</keyword>
<keyword id="KW-0812">Transmembrane</keyword>
<keyword id="KW-1133">Transmembrane helix</keyword>
<keyword id="KW-0813">Transport</keyword>